<feature type="chain" id="PRO_0000160150" description="Glucosamine-6-phosphate deaminase">
    <location>
        <begin position="1"/>
        <end position="235"/>
    </location>
</feature>
<feature type="active site" description="Proton acceptor; for enolization step" evidence="1">
    <location>
        <position position="62"/>
    </location>
</feature>
<feature type="active site" description="For ring-opening step" evidence="1">
    <location>
        <position position="128"/>
    </location>
</feature>
<feature type="active site" description="Proton acceptor; for ring-opening step" evidence="1">
    <location>
        <position position="130"/>
    </location>
</feature>
<feature type="active site" description="For ring-opening step" evidence="1">
    <location>
        <position position="135"/>
    </location>
</feature>
<evidence type="ECO:0000255" key="1">
    <source>
        <dbReference type="HAMAP-Rule" id="MF_01241"/>
    </source>
</evidence>
<comment type="function">
    <text evidence="1">Catalyzes the reversible isomerization-deamination of glucosamine 6-phosphate (GlcN6P) to form fructose 6-phosphate (Fru6P) and ammonium ion.</text>
</comment>
<comment type="catalytic activity">
    <reaction evidence="1">
        <text>alpha-D-glucosamine 6-phosphate + H2O = beta-D-fructose 6-phosphate + NH4(+)</text>
        <dbReference type="Rhea" id="RHEA:12172"/>
        <dbReference type="ChEBI" id="CHEBI:15377"/>
        <dbReference type="ChEBI" id="CHEBI:28938"/>
        <dbReference type="ChEBI" id="CHEBI:57634"/>
        <dbReference type="ChEBI" id="CHEBI:75989"/>
        <dbReference type="EC" id="3.5.99.6"/>
    </reaction>
</comment>
<comment type="pathway">
    <text evidence="1">Amino-sugar metabolism; N-acetylneuraminate degradation; D-fructose 6-phosphate from N-acetylneuraminate: step 5/5.</text>
</comment>
<comment type="similarity">
    <text evidence="1">Belongs to the glucosamine/galactosamine-6-phosphate isomerase family. NagB subfamily.</text>
</comment>
<dbReference type="EC" id="3.5.99.6" evidence="1"/>
<dbReference type="EMBL" id="AE005176">
    <property type="protein sequence ID" value="AAK05671.1"/>
    <property type="molecule type" value="Genomic_DNA"/>
</dbReference>
<dbReference type="PIR" id="E86821">
    <property type="entry name" value="E86821"/>
</dbReference>
<dbReference type="RefSeq" id="NP_267729.1">
    <property type="nucleotide sequence ID" value="NC_002662.1"/>
</dbReference>
<dbReference type="RefSeq" id="WP_003130716.1">
    <property type="nucleotide sequence ID" value="NC_002662.1"/>
</dbReference>
<dbReference type="SMR" id="Q9CFA8"/>
<dbReference type="PaxDb" id="272623-L14408"/>
<dbReference type="EnsemblBacteria" id="AAK05671">
    <property type="protein sequence ID" value="AAK05671"/>
    <property type="gene ID" value="L14408"/>
</dbReference>
<dbReference type="KEGG" id="lla:L14408"/>
<dbReference type="PATRIC" id="fig|272623.7.peg.1691"/>
<dbReference type="eggNOG" id="COG0363">
    <property type="taxonomic scope" value="Bacteria"/>
</dbReference>
<dbReference type="HOGENOM" id="CLU_049611_1_0_9"/>
<dbReference type="OrthoDB" id="9791139at2"/>
<dbReference type="UniPathway" id="UPA00629">
    <property type="reaction ID" value="UER00684"/>
</dbReference>
<dbReference type="Proteomes" id="UP000002196">
    <property type="component" value="Chromosome"/>
</dbReference>
<dbReference type="GO" id="GO:0005737">
    <property type="term" value="C:cytoplasm"/>
    <property type="evidence" value="ECO:0007669"/>
    <property type="project" value="TreeGrafter"/>
</dbReference>
<dbReference type="GO" id="GO:0004342">
    <property type="term" value="F:glucosamine-6-phosphate deaminase activity"/>
    <property type="evidence" value="ECO:0007669"/>
    <property type="project" value="UniProtKB-UniRule"/>
</dbReference>
<dbReference type="GO" id="GO:0042802">
    <property type="term" value="F:identical protein binding"/>
    <property type="evidence" value="ECO:0007669"/>
    <property type="project" value="TreeGrafter"/>
</dbReference>
<dbReference type="GO" id="GO:0005975">
    <property type="term" value="P:carbohydrate metabolic process"/>
    <property type="evidence" value="ECO:0007669"/>
    <property type="project" value="InterPro"/>
</dbReference>
<dbReference type="GO" id="GO:0006043">
    <property type="term" value="P:glucosamine catabolic process"/>
    <property type="evidence" value="ECO:0007669"/>
    <property type="project" value="TreeGrafter"/>
</dbReference>
<dbReference type="GO" id="GO:0006046">
    <property type="term" value="P:N-acetylglucosamine catabolic process"/>
    <property type="evidence" value="ECO:0007669"/>
    <property type="project" value="TreeGrafter"/>
</dbReference>
<dbReference type="GO" id="GO:0019262">
    <property type="term" value="P:N-acetylneuraminate catabolic process"/>
    <property type="evidence" value="ECO:0007669"/>
    <property type="project" value="UniProtKB-UniRule"/>
</dbReference>
<dbReference type="CDD" id="cd01399">
    <property type="entry name" value="GlcN6P_deaminase"/>
    <property type="match status" value="1"/>
</dbReference>
<dbReference type="FunFam" id="3.40.50.1360:FF:000003">
    <property type="entry name" value="Glucosamine-6-phosphate deaminase"/>
    <property type="match status" value="1"/>
</dbReference>
<dbReference type="Gene3D" id="3.40.50.1360">
    <property type="match status" value="1"/>
</dbReference>
<dbReference type="HAMAP" id="MF_01241">
    <property type="entry name" value="GlcN6P_deamin"/>
    <property type="match status" value="1"/>
</dbReference>
<dbReference type="InterPro" id="IPR006148">
    <property type="entry name" value="Glc/Gal-6P_isomerase"/>
</dbReference>
<dbReference type="InterPro" id="IPR004547">
    <property type="entry name" value="Glucosamine6P_isomerase"/>
</dbReference>
<dbReference type="InterPro" id="IPR018321">
    <property type="entry name" value="Glucosamine6P_isomerase_CS"/>
</dbReference>
<dbReference type="InterPro" id="IPR037171">
    <property type="entry name" value="NagB/RpiA_transferase-like"/>
</dbReference>
<dbReference type="PANTHER" id="PTHR11280">
    <property type="entry name" value="GLUCOSAMINE-6-PHOSPHATE ISOMERASE"/>
    <property type="match status" value="1"/>
</dbReference>
<dbReference type="PANTHER" id="PTHR11280:SF5">
    <property type="entry name" value="GLUCOSAMINE-6-PHOSPHATE ISOMERASE"/>
    <property type="match status" value="1"/>
</dbReference>
<dbReference type="Pfam" id="PF01182">
    <property type="entry name" value="Glucosamine_iso"/>
    <property type="match status" value="1"/>
</dbReference>
<dbReference type="SUPFAM" id="SSF100950">
    <property type="entry name" value="NagB/RpiA/CoA transferase-like"/>
    <property type="match status" value="1"/>
</dbReference>
<dbReference type="PROSITE" id="PS01161">
    <property type="entry name" value="GLC_GALNAC_ISOMERASE"/>
    <property type="match status" value="1"/>
</dbReference>
<proteinExistence type="inferred from homology"/>
<keyword id="KW-0119">Carbohydrate metabolism</keyword>
<keyword id="KW-0378">Hydrolase</keyword>
<keyword id="KW-1185">Reference proteome</keyword>
<gene>
    <name evidence="1" type="primary">nagB</name>
    <name type="ordered locus">LL1573</name>
    <name type="ORF">L14408</name>
</gene>
<reference key="1">
    <citation type="journal article" date="2001" name="Genome Res.">
        <title>The complete genome sequence of the lactic acid bacterium Lactococcus lactis ssp. lactis IL1403.</title>
        <authorList>
            <person name="Bolotin A."/>
            <person name="Wincker P."/>
            <person name="Mauger S."/>
            <person name="Jaillon O."/>
            <person name="Malarme K."/>
            <person name="Weissenbach J."/>
            <person name="Ehrlich S.D."/>
            <person name="Sorokin A."/>
        </authorList>
    </citation>
    <scope>NUCLEOTIDE SEQUENCE [LARGE SCALE GENOMIC DNA]</scope>
    <source>
        <strain>IL1403</strain>
    </source>
</reference>
<accession>Q9CFA8</accession>
<sequence>MKVIVVKNQLEGGKIGLDLLKKSMANGAKTLGLATGSTPVEFYNQIVNSDLDFTDMVSVNLDEYVGLDGSNDQSYRYFMTKHLFGEKPFKENFLPNGKAADLEAEAKHYDQIIEENPIDWQILGIGQNGHIGFNEPGTPAEITTHVVDLQESTIKANARFFESEADVPRKAISMGLASIMKSKNIVLMAYGKEKAEAIKGMVEGEVTTELPASILQNHANVTVIADEAAVSLLSK</sequence>
<organism>
    <name type="scientific">Lactococcus lactis subsp. lactis (strain IL1403)</name>
    <name type="common">Streptococcus lactis</name>
    <dbReference type="NCBI Taxonomy" id="272623"/>
    <lineage>
        <taxon>Bacteria</taxon>
        <taxon>Bacillati</taxon>
        <taxon>Bacillota</taxon>
        <taxon>Bacilli</taxon>
        <taxon>Lactobacillales</taxon>
        <taxon>Streptococcaceae</taxon>
        <taxon>Lactococcus</taxon>
    </lineage>
</organism>
<protein>
    <recommendedName>
        <fullName evidence="1">Glucosamine-6-phosphate deaminase</fullName>
        <ecNumber evidence="1">3.5.99.6</ecNumber>
    </recommendedName>
    <alternativeName>
        <fullName evidence="1">GlcN6P deaminase</fullName>
        <shortName evidence="1">GNPDA</shortName>
    </alternativeName>
    <alternativeName>
        <fullName evidence="1">Glucosamine-6-phosphate isomerase</fullName>
    </alternativeName>
</protein>
<name>NAGB_LACLA</name>